<feature type="chain" id="PRO_0000108538" description="Transcriptional regulator MraZ">
    <location>
        <begin position="1"/>
        <end position="143"/>
    </location>
</feature>
<feature type="domain" description="SpoVT-AbrB 1" evidence="2">
    <location>
        <begin position="5"/>
        <end position="47"/>
    </location>
</feature>
<feature type="domain" description="SpoVT-AbrB 2" evidence="2">
    <location>
        <begin position="76"/>
        <end position="119"/>
    </location>
</feature>
<reference key="1">
    <citation type="journal article" date="2005" name="J. Bacteriol.">
        <title>Insights on evolution of virulence and resistance from the complete genome analysis of an early methicillin-resistant Staphylococcus aureus strain and a biofilm-producing methicillin-resistant Staphylococcus epidermidis strain.</title>
        <authorList>
            <person name="Gill S.R."/>
            <person name="Fouts D.E."/>
            <person name="Archer G.L."/>
            <person name="Mongodin E.F."/>
            <person name="DeBoy R.T."/>
            <person name="Ravel J."/>
            <person name="Paulsen I.T."/>
            <person name="Kolonay J.F."/>
            <person name="Brinkac L.M."/>
            <person name="Beanan M.J."/>
            <person name="Dodson R.J."/>
            <person name="Daugherty S.C."/>
            <person name="Madupu R."/>
            <person name="Angiuoli S.V."/>
            <person name="Durkin A.S."/>
            <person name="Haft D.H."/>
            <person name="Vamathevan J.J."/>
            <person name="Khouri H."/>
            <person name="Utterback T.R."/>
            <person name="Lee C."/>
            <person name="Dimitrov G."/>
            <person name="Jiang L."/>
            <person name="Qin H."/>
            <person name="Weidman J."/>
            <person name="Tran K."/>
            <person name="Kang K.H."/>
            <person name="Hance I.R."/>
            <person name="Nelson K.E."/>
            <person name="Fraser C.M."/>
        </authorList>
    </citation>
    <scope>NUCLEOTIDE SEQUENCE [LARGE SCALE GENOMIC DNA]</scope>
    <source>
        <strain>COL</strain>
    </source>
</reference>
<proteinExistence type="inferred from homology"/>
<organism>
    <name type="scientific">Staphylococcus aureus (strain COL)</name>
    <dbReference type="NCBI Taxonomy" id="93062"/>
    <lineage>
        <taxon>Bacteria</taxon>
        <taxon>Bacillati</taxon>
        <taxon>Bacillota</taxon>
        <taxon>Bacilli</taxon>
        <taxon>Bacillales</taxon>
        <taxon>Staphylococcaceae</taxon>
        <taxon>Staphylococcus</taxon>
    </lineage>
</organism>
<comment type="subunit">
    <text evidence="1">Forms oligomers.</text>
</comment>
<comment type="subcellular location">
    <subcellularLocation>
        <location evidence="1">Cytoplasm</location>
        <location evidence="1">Nucleoid</location>
    </subcellularLocation>
</comment>
<comment type="similarity">
    <text evidence="1">Belongs to the MraZ family.</text>
</comment>
<name>MRAZ_STAAC</name>
<keyword id="KW-0963">Cytoplasm</keyword>
<keyword id="KW-0238">DNA-binding</keyword>
<keyword id="KW-0677">Repeat</keyword>
<keyword id="KW-0804">Transcription</keyword>
<keyword id="KW-0805">Transcription regulation</keyword>
<accession>Q5HGQ3</accession>
<dbReference type="EMBL" id="CP000046">
    <property type="protein sequence ID" value="AAW36570.1"/>
    <property type="molecule type" value="Genomic_DNA"/>
</dbReference>
<dbReference type="RefSeq" id="WP_000480800.1">
    <property type="nucleotide sequence ID" value="NZ_JBGOFO010000002.1"/>
</dbReference>
<dbReference type="SMR" id="Q5HGQ3"/>
<dbReference type="GeneID" id="66839371"/>
<dbReference type="KEGG" id="sac:SACOL1191"/>
<dbReference type="HOGENOM" id="CLU_107907_0_5_9"/>
<dbReference type="Proteomes" id="UP000000530">
    <property type="component" value="Chromosome"/>
</dbReference>
<dbReference type="GO" id="GO:0005737">
    <property type="term" value="C:cytoplasm"/>
    <property type="evidence" value="ECO:0007669"/>
    <property type="project" value="UniProtKB-UniRule"/>
</dbReference>
<dbReference type="GO" id="GO:0009295">
    <property type="term" value="C:nucleoid"/>
    <property type="evidence" value="ECO:0007669"/>
    <property type="project" value="UniProtKB-SubCell"/>
</dbReference>
<dbReference type="GO" id="GO:0003700">
    <property type="term" value="F:DNA-binding transcription factor activity"/>
    <property type="evidence" value="ECO:0007669"/>
    <property type="project" value="UniProtKB-UniRule"/>
</dbReference>
<dbReference type="GO" id="GO:0000976">
    <property type="term" value="F:transcription cis-regulatory region binding"/>
    <property type="evidence" value="ECO:0007669"/>
    <property type="project" value="TreeGrafter"/>
</dbReference>
<dbReference type="GO" id="GO:2000143">
    <property type="term" value="P:negative regulation of DNA-templated transcription initiation"/>
    <property type="evidence" value="ECO:0007669"/>
    <property type="project" value="TreeGrafter"/>
</dbReference>
<dbReference type="CDD" id="cd16321">
    <property type="entry name" value="MraZ_C"/>
    <property type="match status" value="1"/>
</dbReference>
<dbReference type="CDD" id="cd16320">
    <property type="entry name" value="MraZ_N"/>
    <property type="match status" value="1"/>
</dbReference>
<dbReference type="FunFam" id="3.40.1550.20:FF:000002">
    <property type="entry name" value="Transcriptional regulator MraZ"/>
    <property type="match status" value="1"/>
</dbReference>
<dbReference type="Gene3D" id="3.40.1550.20">
    <property type="entry name" value="Transcriptional regulator MraZ domain"/>
    <property type="match status" value="1"/>
</dbReference>
<dbReference type="HAMAP" id="MF_01008">
    <property type="entry name" value="MraZ"/>
    <property type="match status" value="1"/>
</dbReference>
<dbReference type="InterPro" id="IPR003444">
    <property type="entry name" value="MraZ"/>
</dbReference>
<dbReference type="InterPro" id="IPR035644">
    <property type="entry name" value="MraZ_C"/>
</dbReference>
<dbReference type="InterPro" id="IPR020603">
    <property type="entry name" value="MraZ_dom"/>
</dbReference>
<dbReference type="InterPro" id="IPR035642">
    <property type="entry name" value="MraZ_N"/>
</dbReference>
<dbReference type="InterPro" id="IPR038619">
    <property type="entry name" value="MraZ_sf"/>
</dbReference>
<dbReference type="InterPro" id="IPR007159">
    <property type="entry name" value="SpoVT-AbrB_dom"/>
</dbReference>
<dbReference type="InterPro" id="IPR037914">
    <property type="entry name" value="SpoVT-AbrB_sf"/>
</dbReference>
<dbReference type="NCBIfam" id="TIGR00242">
    <property type="entry name" value="division/cell wall cluster transcriptional repressor MraZ"/>
    <property type="match status" value="1"/>
</dbReference>
<dbReference type="PANTHER" id="PTHR34701">
    <property type="entry name" value="TRANSCRIPTIONAL REGULATOR MRAZ"/>
    <property type="match status" value="1"/>
</dbReference>
<dbReference type="PANTHER" id="PTHR34701:SF1">
    <property type="entry name" value="TRANSCRIPTIONAL REGULATOR MRAZ"/>
    <property type="match status" value="1"/>
</dbReference>
<dbReference type="Pfam" id="PF02381">
    <property type="entry name" value="MraZ"/>
    <property type="match status" value="2"/>
</dbReference>
<dbReference type="SUPFAM" id="SSF89447">
    <property type="entry name" value="AbrB/MazE/MraZ-like"/>
    <property type="match status" value="1"/>
</dbReference>
<dbReference type="PROSITE" id="PS51740">
    <property type="entry name" value="SPOVT_ABRB"/>
    <property type="match status" value="2"/>
</dbReference>
<sequence length="143" mass="17238">MFMGEYDHQLDTKGRMIIPSKFRYDLNERFIITRGLDKCLFGYTLDEWQQIEEKMKTLPMTKKDARKFMRMFFSGAVEVELDKQGRINIPQNLRKYANLTKECTVIGVSNRIEIWDRETWNDFYEESEESFEDIAEDLIDFDF</sequence>
<protein>
    <recommendedName>
        <fullName>Transcriptional regulator MraZ</fullName>
    </recommendedName>
</protein>
<evidence type="ECO:0000255" key="1">
    <source>
        <dbReference type="HAMAP-Rule" id="MF_01008"/>
    </source>
</evidence>
<evidence type="ECO:0000255" key="2">
    <source>
        <dbReference type="PROSITE-ProRule" id="PRU01076"/>
    </source>
</evidence>
<gene>
    <name evidence="1" type="primary">mraZ</name>
    <name type="ordered locus">SACOL1191</name>
</gene>